<dbReference type="EMBL" id="CP000249">
    <property type="protein sequence ID" value="ABD09995.1"/>
    <property type="molecule type" value="Genomic_DNA"/>
</dbReference>
<dbReference type="RefSeq" id="WP_011435064.1">
    <property type="nucleotide sequence ID" value="NZ_MSEA01000045.1"/>
</dbReference>
<dbReference type="SMR" id="Q2JFE7"/>
<dbReference type="STRING" id="106370.Francci3_0611"/>
<dbReference type="KEGG" id="fra:Francci3_0611"/>
<dbReference type="eggNOG" id="COG0203">
    <property type="taxonomic scope" value="Bacteria"/>
</dbReference>
<dbReference type="HOGENOM" id="CLU_074407_0_0_11"/>
<dbReference type="OrthoDB" id="9809073at2"/>
<dbReference type="PhylomeDB" id="Q2JFE7"/>
<dbReference type="Proteomes" id="UP000001937">
    <property type="component" value="Chromosome"/>
</dbReference>
<dbReference type="GO" id="GO:0022625">
    <property type="term" value="C:cytosolic large ribosomal subunit"/>
    <property type="evidence" value="ECO:0007669"/>
    <property type="project" value="TreeGrafter"/>
</dbReference>
<dbReference type="GO" id="GO:0003735">
    <property type="term" value="F:structural constituent of ribosome"/>
    <property type="evidence" value="ECO:0007669"/>
    <property type="project" value="InterPro"/>
</dbReference>
<dbReference type="GO" id="GO:0006412">
    <property type="term" value="P:translation"/>
    <property type="evidence" value="ECO:0007669"/>
    <property type="project" value="UniProtKB-UniRule"/>
</dbReference>
<dbReference type="FunFam" id="3.90.1030.10:FF:000001">
    <property type="entry name" value="50S ribosomal protein L17"/>
    <property type="match status" value="1"/>
</dbReference>
<dbReference type="Gene3D" id="3.90.1030.10">
    <property type="entry name" value="Ribosomal protein L17"/>
    <property type="match status" value="1"/>
</dbReference>
<dbReference type="HAMAP" id="MF_01368">
    <property type="entry name" value="Ribosomal_bL17"/>
    <property type="match status" value="1"/>
</dbReference>
<dbReference type="InterPro" id="IPR000456">
    <property type="entry name" value="Ribosomal_bL17"/>
</dbReference>
<dbReference type="InterPro" id="IPR047859">
    <property type="entry name" value="Ribosomal_bL17_CS"/>
</dbReference>
<dbReference type="InterPro" id="IPR036373">
    <property type="entry name" value="Ribosomal_bL17_sf"/>
</dbReference>
<dbReference type="NCBIfam" id="TIGR00059">
    <property type="entry name" value="L17"/>
    <property type="match status" value="1"/>
</dbReference>
<dbReference type="PANTHER" id="PTHR14413:SF16">
    <property type="entry name" value="LARGE RIBOSOMAL SUBUNIT PROTEIN BL17M"/>
    <property type="match status" value="1"/>
</dbReference>
<dbReference type="PANTHER" id="PTHR14413">
    <property type="entry name" value="RIBOSOMAL PROTEIN L17"/>
    <property type="match status" value="1"/>
</dbReference>
<dbReference type="Pfam" id="PF01196">
    <property type="entry name" value="Ribosomal_L17"/>
    <property type="match status" value="1"/>
</dbReference>
<dbReference type="SUPFAM" id="SSF64263">
    <property type="entry name" value="Prokaryotic ribosomal protein L17"/>
    <property type="match status" value="1"/>
</dbReference>
<dbReference type="PROSITE" id="PS01167">
    <property type="entry name" value="RIBOSOMAL_L17"/>
    <property type="match status" value="1"/>
</dbReference>
<proteinExistence type="inferred from homology"/>
<accession>Q2JFE7</accession>
<evidence type="ECO:0000255" key="1">
    <source>
        <dbReference type="HAMAP-Rule" id="MF_01368"/>
    </source>
</evidence>
<evidence type="ECO:0000256" key="2">
    <source>
        <dbReference type="SAM" id="MobiDB-lite"/>
    </source>
</evidence>
<evidence type="ECO:0000305" key="3"/>
<gene>
    <name evidence="1" type="primary">rplQ</name>
    <name type="ordered locus">Francci3_0611</name>
</gene>
<protein>
    <recommendedName>
        <fullName evidence="1">Large ribosomal subunit protein bL17</fullName>
    </recommendedName>
    <alternativeName>
        <fullName evidence="3">50S ribosomal protein L17</fullName>
    </alternativeName>
</protein>
<reference key="1">
    <citation type="journal article" date="2007" name="Genome Res.">
        <title>Genome characteristics of facultatively symbiotic Frankia sp. strains reflect host range and host plant biogeography.</title>
        <authorList>
            <person name="Normand P."/>
            <person name="Lapierre P."/>
            <person name="Tisa L.S."/>
            <person name="Gogarten J.P."/>
            <person name="Alloisio N."/>
            <person name="Bagnarol E."/>
            <person name="Bassi C.A."/>
            <person name="Berry A.M."/>
            <person name="Bickhart D.M."/>
            <person name="Choisne N."/>
            <person name="Couloux A."/>
            <person name="Cournoyer B."/>
            <person name="Cruveiller S."/>
            <person name="Daubin V."/>
            <person name="Demange N."/>
            <person name="Francino M.P."/>
            <person name="Goltsman E."/>
            <person name="Huang Y."/>
            <person name="Kopp O.R."/>
            <person name="Labarre L."/>
            <person name="Lapidus A."/>
            <person name="Lavire C."/>
            <person name="Marechal J."/>
            <person name="Martinez M."/>
            <person name="Mastronunzio J.E."/>
            <person name="Mullin B.C."/>
            <person name="Niemann J."/>
            <person name="Pujic P."/>
            <person name="Rawnsley T."/>
            <person name="Rouy Z."/>
            <person name="Schenowitz C."/>
            <person name="Sellstedt A."/>
            <person name="Tavares F."/>
            <person name="Tomkins J.P."/>
            <person name="Vallenet D."/>
            <person name="Valverde C."/>
            <person name="Wall L.G."/>
            <person name="Wang Y."/>
            <person name="Medigue C."/>
            <person name="Benson D.R."/>
        </authorList>
    </citation>
    <scope>NUCLEOTIDE SEQUENCE [LARGE SCALE GENOMIC DNA]</scope>
    <source>
        <strain>DSM 45818 / CECT 9043 / HFP020203 / CcI3</strain>
    </source>
</reference>
<feature type="chain" id="PRO_1000055826" description="Large ribosomal subunit protein bL17">
    <location>
        <begin position="1"/>
        <end position="206"/>
    </location>
</feature>
<feature type="region of interest" description="Disordered" evidence="2">
    <location>
        <begin position="130"/>
        <end position="206"/>
    </location>
</feature>
<feature type="compositionally biased region" description="Basic and acidic residues" evidence="2">
    <location>
        <begin position="130"/>
        <end position="141"/>
    </location>
</feature>
<feature type="compositionally biased region" description="Low complexity" evidence="2">
    <location>
        <begin position="160"/>
        <end position="181"/>
    </location>
</feature>
<feature type="compositionally biased region" description="Low complexity" evidence="2">
    <location>
        <begin position="189"/>
        <end position="200"/>
    </location>
</feature>
<organism>
    <name type="scientific">Frankia casuarinae (strain DSM 45818 / CECT 9043 / HFP020203 / CcI3)</name>
    <dbReference type="NCBI Taxonomy" id="106370"/>
    <lineage>
        <taxon>Bacteria</taxon>
        <taxon>Bacillati</taxon>
        <taxon>Actinomycetota</taxon>
        <taxon>Actinomycetes</taxon>
        <taxon>Frankiales</taxon>
        <taxon>Frankiaceae</taxon>
        <taxon>Frankia</taxon>
    </lineage>
</organism>
<comment type="subunit">
    <text evidence="1">Part of the 50S ribosomal subunit. Contacts protein L32.</text>
</comment>
<comment type="similarity">
    <text evidence="1">Belongs to the bacterial ribosomal protein bL17 family.</text>
</comment>
<name>RL17_FRACC</name>
<sequence length="206" mass="21833">MPTPTKGARLGGSPAHERLLLANLATALFEHGGITTTEAKAKRLRPYAERLVTFAKRGDLHARRRVMRQVRDNSVVHTLFTEIGPRYANRNGGYTRIVKIGNRKGDNAPLARIELVEALTVGQQAVSEAERARGTRFEARRKPTGATVEAAEELAQESPTAAAVAVEAAEPAETPAEGAAGKPTTAQTDDSGIGDDSGAGEQNSAN</sequence>
<keyword id="KW-1185">Reference proteome</keyword>
<keyword id="KW-0687">Ribonucleoprotein</keyword>
<keyword id="KW-0689">Ribosomal protein</keyword>